<gene>
    <name type="primary">Rhox5</name>
    <name type="synonym">Pem</name>
</gene>
<organism>
    <name type="scientific">Mus musculus</name>
    <name type="common">Mouse</name>
    <dbReference type="NCBI Taxonomy" id="10090"/>
    <lineage>
        <taxon>Eukaryota</taxon>
        <taxon>Metazoa</taxon>
        <taxon>Chordata</taxon>
        <taxon>Craniata</taxon>
        <taxon>Vertebrata</taxon>
        <taxon>Euteleostomi</taxon>
        <taxon>Mammalia</taxon>
        <taxon>Eutheria</taxon>
        <taxon>Euarchontoglires</taxon>
        <taxon>Glires</taxon>
        <taxon>Rodentia</taxon>
        <taxon>Myomorpha</taxon>
        <taxon>Muroidea</taxon>
        <taxon>Muridae</taxon>
        <taxon>Murinae</taxon>
        <taxon>Mus</taxon>
        <taxon>Mus</taxon>
    </lineage>
</organism>
<reference key="1">
    <citation type="journal article" date="1990" name="Dev. Biol.">
        <title>A novel oncofetal gene is expressed in a stage-specific manner in murine embryonic development.</title>
        <authorList>
            <person name="Wilkinson M.F."/>
            <person name="Kleenman J."/>
            <person name="Richards J."/>
            <person name="Macleod C.L."/>
        </authorList>
    </citation>
    <scope>NUCLEOTIDE SEQUENCE [MRNA]</scope>
    <scope>DEVELOPMENTAL STAGE</scope>
    <source>
        <strain>AKR/J</strain>
    </source>
</reference>
<reference key="2">
    <citation type="journal article" date="1991" name="Dev. Biol.">
        <authorList>
            <person name="Wilkinson M.F."/>
            <person name="Kleenman J."/>
            <person name="Richards J."/>
            <person name="Macleod C.L."/>
        </authorList>
    </citation>
    <scope>ERRATUM OF PUBMED:2210045</scope>
</reference>
<reference key="3">
    <citation type="journal article" date="1991" name="Mech. Dev.">
        <title>The oncofetal gene Pem encodes a homeodomain and is regulated in primordial and pre-muscle stem cells.</title>
        <authorList>
            <person name="Sasaki A.W."/>
            <person name="Doskow J."/>
            <person name="Macleod C.L."/>
            <person name="Rogers M.B."/>
            <person name="Gudas L.J."/>
            <person name="Wilkinson M.F."/>
        </authorList>
    </citation>
    <scope>NUCLEOTIDE SEQUENCE [MRNA]</scope>
    <source>
        <strain>AKR/J</strain>
    </source>
</reference>
<reference key="4">
    <citation type="submission" date="1996-03" db="EMBL/GenBank/DDBJ databases">
        <authorList>
            <person name="Sutton K.A."/>
        </authorList>
    </citation>
    <scope>NUCLEOTIDE SEQUENCE OF 1-161</scope>
    <source>
        <strain>BALB/cJ</strain>
    </source>
</reference>
<reference key="5">
    <citation type="journal article" date="1991" name="Dev. Biol.">
        <title>The oncofetal gene Pem specifies a divergent paired class homeodomain.</title>
        <authorList>
            <person name="Rayle R.E."/>
        </authorList>
    </citation>
    <scope>DISCUSSION OF HOMEOBOX SEQUENCE</scope>
</reference>
<reference key="6">
    <citation type="journal article" date="2013" name="Cell">
        <title>Dnmt3L antagonizes DNA methylation at bivalent promoters and favors DNA methylation at gene bodies in ESCs.</title>
        <authorList>
            <person name="Neri F."/>
            <person name="Krepelova A."/>
            <person name="Incarnato D."/>
            <person name="Maldotti M."/>
            <person name="Parlato C."/>
            <person name="Galvagni F."/>
            <person name="Matarese F."/>
            <person name="Stunnenberg H.G."/>
            <person name="Oliviero S."/>
        </authorList>
    </citation>
    <scope>FUNCTION</scope>
    <scope>INDUCTION</scope>
</reference>
<evidence type="ECO:0000256" key="1">
    <source>
        <dbReference type="SAM" id="MobiDB-lite"/>
    </source>
</evidence>
<evidence type="ECO:0000269" key="2">
    <source>
    </source>
</evidence>
<evidence type="ECO:0000269" key="3">
    <source>
    </source>
</evidence>
<evidence type="ECO:0000305" key="4"/>
<keyword id="KW-0221">Differentiation</keyword>
<keyword id="KW-0238">DNA-binding</keyword>
<keyword id="KW-0371">Homeobox</keyword>
<keyword id="KW-0539">Nucleus</keyword>
<keyword id="KW-1185">Reference proteome</keyword>
<name>RHOX5_MOUSE</name>
<protein>
    <recommendedName>
        <fullName>Homeobox protein Rhox5</fullName>
    </recommendedName>
    <alternativeName>
        <fullName>Homeobox protein Pem</fullName>
    </alternativeName>
    <alternativeName>
        <fullName>Placenta and embryonic expression protein</fullName>
    </alternativeName>
    <alternativeName>
        <fullName>Reproductive homeobox on chromosome X 5</fullName>
    </alternativeName>
</protein>
<accession>P52651</accession>
<feature type="chain" id="PRO_0000049243" description="Homeobox protein Rhox5">
    <location>
        <begin position="1"/>
        <end position="210"/>
    </location>
</feature>
<feature type="DNA-binding region" description="Homeobox; atypical">
    <location>
        <begin position="117"/>
        <end position="175"/>
    </location>
</feature>
<feature type="region of interest" description="Disordered" evidence="1">
    <location>
        <begin position="1"/>
        <end position="119"/>
    </location>
</feature>
<feature type="compositionally biased region" description="Basic and acidic residues" evidence="1">
    <location>
        <begin position="17"/>
        <end position="30"/>
    </location>
</feature>
<feature type="compositionally biased region" description="Gly residues" evidence="1">
    <location>
        <begin position="47"/>
        <end position="79"/>
    </location>
</feature>
<proteinExistence type="evidence at transcript level"/>
<sequence length="210" mass="23045">MEAEGSSRKVTRLLRLGVKEDSEEQHDVKAEAFFQAGEGRDEQGAQGQPGVGAVGTEGEGEELNGGKGHFGPGAPGPMGDGDKDSGTRAGGVEQEQNEPVAEGTESQENGNPGGRQMPLQGSRFAQHRLRELESILQRTNSFDVPREDLDRLMDACVSRVQNWFKIRRAAARRTRRRATPVPEHFRGTFECPACRGVRWGERCPFATPRF</sequence>
<comment type="function">
    <text evidence="3">Transcription factor required for differentiation of embryonic stem cells (ESCs) into primordial germ cells.</text>
</comment>
<comment type="subcellular location">
    <subcellularLocation>
        <location evidence="4">Nucleus</location>
    </subcellularLocation>
</comment>
<comment type="developmental stage">
    <text evidence="2">Expressed in a stage specific manner during murine ontogeny. Not detectably expressed in adult tissues.</text>
</comment>
<comment type="induction">
    <text evidence="3">Expression in embryonic stem cells (ESCs) is dependent on DNMT3L, which mnaintains a low DNA methylation on promoters, allowing its expression.</text>
</comment>
<dbReference type="EMBL" id="M32484">
    <property type="protein sequence ID" value="AAC42025.1"/>
    <property type="molecule type" value="mRNA"/>
</dbReference>
<dbReference type="EMBL" id="U50747">
    <property type="protein sequence ID" value="AAA96048.1"/>
    <property type="molecule type" value="Genomic_DNA"/>
</dbReference>
<dbReference type="CCDS" id="CCDS57752.1"/>
<dbReference type="PIR" id="A49770">
    <property type="entry name" value="A37358"/>
</dbReference>
<dbReference type="SMR" id="P52651"/>
<dbReference type="FunCoup" id="P52651">
    <property type="interactions" value="17"/>
</dbReference>
<dbReference type="STRING" id="10090.ENSMUSP00000137526"/>
<dbReference type="GlyGen" id="P52651">
    <property type="glycosylation" value="1 site, 1 O-linked glycan (1 site)"/>
</dbReference>
<dbReference type="iPTMnet" id="P52651"/>
<dbReference type="PhosphoSitePlus" id="P52651"/>
<dbReference type="PaxDb" id="10090-ENSMUSP00000139179"/>
<dbReference type="PeptideAtlas" id="P52651"/>
<dbReference type="ProteomicsDB" id="253237"/>
<dbReference type="Pumba" id="P52651"/>
<dbReference type="AGR" id="MGI:97538"/>
<dbReference type="MGI" id="MGI:97538">
    <property type="gene designation" value="Rhox5"/>
</dbReference>
<dbReference type="InParanoid" id="P52651"/>
<dbReference type="ChiTaRS" id="Rhox5">
    <property type="organism name" value="mouse"/>
</dbReference>
<dbReference type="PRO" id="PR:P52651"/>
<dbReference type="Proteomes" id="UP000000589">
    <property type="component" value="Unplaced"/>
</dbReference>
<dbReference type="RNAct" id="P52651">
    <property type="molecule type" value="protein"/>
</dbReference>
<dbReference type="GO" id="GO:0000785">
    <property type="term" value="C:chromatin"/>
    <property type="evidence" value="ECO:0000305"/>
    <property type="project" value="MGI"/>
</dbReference>
<dbReference type="GO" id="GO:0005737">
    <property type="term" value="C:cytoplasm"/>
    <property type="evidence" value="ECO:0000314"/>
    <property type="project" value="MGI"/>
</dbReference>
<dbReference type="GO" id="GO:0005634">
    <property type="term" value="C:nucleus"/>
    <property type="evidence" value="ECO:0000314"/>
    <property type="project" value="CACAO"/>
</dbReference>
<dbReference type="GO" id="GO:0003677">
    <property type="term" value="F:DNA binding"/>
    <property type="evidence" value="ECO:0007669"/>
    <property type="project" value="UniProtKB-KW"/>
</dbReference>
<dbReference type="GO" id="GO:0001228">
    <property type="term" value="F:DNA-binding transcription activator activity, RNA polymerase II-specific"/>
    <property type="evidence" value="ECO:0000314"/>
    <property type="project" value="MGI"/>
</dbReference>
<dbReference type="GO" id="GO:0035234">
    <property type="term" value="P:ectopic germ cell programmed cell death"/>
    <property type="evidence" value="ECO:0000315"/>
    <property type="project" value="MGI"/>
</dbReference>
<dbReference type="GO" id="GO:0030317">
    <property type="term" value="P:flagellated sperm motility"/>
    <property type="evidence" value="ECO:0000315"/>
    <property type="project" value="MGI"/>
</dbReference>
<dbReference type="GO" id="GO:0000122">
    <property type="term" value="P:negative regulation of transcription by RNA polymerase II"/>
    <property type="evidence" value="ECO:0000314"/>
    <property type="project" value="MGI"/>
</dbReference>
<dbReference type="GO" id="GO:0045893">
    <property type="term" value="P:positive regulation of DNA-templated transcription"/>
    <property type="evidence" value="ECO:0000314"/>
    <property type="project" value="MGI"/>
</dbReference>
<dbReference type="Gene3D" id="1.10.10.60">
    <property type="entry name" value="Homeodomain-like"/>
    <property type="match status" value="1"/>
</dbReference>
<dbReference type="InterPro" id="IPR001356">
    <property type="entry name" value="HD"/>
</dbReference>
<dbReference type="PANTHER" id="PTHR47465:SF6">
    <property type="entry name" value="HOMEOBOX PROTEIN RHOX5"/>
    <property type="match status" value="1"/>
</dbReference>
<dbReference type="PANTHER" id="PTHR47465">
    <property type="entry name" value="MCG113260-RELATED-RELATED"/>
    <property type="match status" value="1"/>
</dbReference>
<dbReference type="SMART" id="SM00389">
    <property type="entry name" value="HOX"/>
    <property type="match status" value="1"/>
</dbReference>